<gene>
    <name type="ordered locus">SPP_0954</name>
</gene>
<reference key="1">
    <citation type="journal article" date="2010" name="Genome Biol.">
        <title>Structure and dynamics of the pan-genome of Streptococcus pneumoniae and closely related species.</title>
        <authorList>
            <person name="Donati C."/>
            <person name="Hiller N.L."/>
            <person name="Tettelin H."/>
            <person name="Muzzi A."/>
            <person name="Croucher N.J."/>
            <person name="Angiuoli S.V."/>
            <person name="Oggioni M."/>
            <person name="Dunning Hotopp J.C."/>
            <person name="Hu F.Z."/>
            <person name="Riley D.R."/>
            <person name="Covacci A."/>
            <person name="Mitchell T.J."/>
            <person name="Bentley S.D."/>
            <person name="Kilian M."/>
            <person name="Ehrlich G.D."/>
            <person name="Rappuoli R."/>
            <person name="Moxon E.R."/>
            <person name="Masignani V."/>
        </authorList>
    </citation>
    <scope>NUCLEOTIDE SEQUENCE [LARGE SCALE GENOMIC DNA]</scope>
    <source>
        <strain>P1031</strain>
    </source>
</reference>
<accession>C1CK31</accession>
<name>Y954_STRZP</name>
<comment type="similarity">
    <text evidence="1">Belongs to the UPF0346 family.</text>
</comment>
<proteinExistence type="inferred from homology"/>
<feature type="chain" id="PRO_1000185210" description="UPF0346 protein SPP_0954">
    <location>
        <begin position="1"/>
        <end position="71"/>
    </location>
</feature>
<evidence type="ECO:0000255" key="1">
    <source>
        <dbReference type="HAMAP-Rule" id="MF_01538"/>
    </source>
</evidence>
<sequence length="71" mass="8462">MRKSFYTWLMTERNPKSNNPKAILADLAFEEAAFPKHTDDFDEVSRFLEEHASFSFNLGDFDSIWQEYLEH</sequence>
<organism>
    <name type="scientific">Streptococcus pneumoniae (strain P1031)</name>
    <dbReference type="NCBI Taxonomy" id="488223"/>
    <lineage>
        <taxon>Bacteria</taxon>
        <taxon>Bacillati</taxon>
        <taxon>Bacillota</taxon>
        <taxon>Bacilli</taxon>
        <taxon>Lactobacillales</taxon>
        <taxon>Streptococcaceae</taxon>
        <taxon>Streptococcus</taxon>
    </lineage>
</organism>
<protein>
    <recommendedName>
        <fullName evidence="1">UPF0346 protein SPP_0954</fullName>
    </recommendedName>
</protein>
<dbReference type="EMBL" id="CP000920">
    <property type="protein sequence ID" value="ACO21929.1"/>
    <property type="molecule type" value="Genomic_DNA"/>
</dbReference>
<dbReference type="RefSeq" id="WP_001232078.1">
    <property type="nucleotide sequence ID" value="NC_012467.1"/>
</dbReference>
<dbReference type="SMR" id="C1CK31"/>
<dbReference type="KEGG" id="spp:SPP_0954"/>
<dbReference type="HOGENOM" id="CLU_177534_1_0_9"/>
<dbReference type="Gene3D" id="1.10.150.260">
    <property type="entry name" value="YozE SAM-like"/>
    <property type="match status" value="1"/>
</dbReference>
<dbReference type="HAMAP" id="MF_01538">
    <property type="entry name" value="UPF0346"/>
    <property type="match status" value="1"/>
</dbReference>
<dbReference type="InterPro" id="IPR010673">
    <property type="entry name" value="UPF0346"/>
</dbReference>
<dbReference type="InterPro" id="IPR023089">
    <property type="entry name" value="YozE_SAM-like"/>
</dbReference>
<dbReference type="InterPro" id="IPR036806">
    <property type="entry name" value="YozE_SAM-like_sf"/>
</dbReference>
<dbReference type="NCBIfam" id="NF010193">
    <property type="entry name" value="PRK13672.1"/>
    <property type="match status" value="1"/>
</dbReference>
<dbReference type="Pfam" id="PF06855">
    <property type="entry name" value="YozE_SAM_like"/>
    <property type="match status" value="1"/>
</dbReference>
<dbReference type="PIRSF" id="PIRSF037262">
    <property type="entry name" value="UCP037262"/>
    <property type="match status" value="1"/>
</dbReference>
<dbReference type="SUPFAM" id="SSF140652">
    <property type="entry name" value="YozE-like"/>
    <property type="match status" value="1"/>
</dbReference>